<evidence type="ECO:0000250" key="1"/>
<evidence type="ECO:0000255" key="2"/>
<evidence type="ECO:0000255" key="3">
    <source>
        <dbReference type="PROSITE-ProRule" id="PRU00521"/>
    </source>
</evidence>
<evidence type="ECO:0000256" key="4">
    <source>
        <dbReference type="SAM" id="MobiDB-lite"/>
    </source>
</evidence>
<comment type="function">
    <text evidence="1">Low-affinity receptor for leukotrienes including leukotriene B4. Mediates chemotaxis of granulocytes and macrophages. The response is mediated via G-proteins that activate a phosphatidylinositol-calcium second messenger system (By similarity).</text>
</comment>
<comment type="subcellular location">
    <subcellularLocation>
        <location>Cell membrane</location>
        <topology>Multi-pass membrane protein</topology>
    </subcellularLocation>
</comment>
<comment type="similarity">
    <text evidence="3">Belongs to the G-protein coupled receptor 1 family.</text>
</comment>
<accession>Q9JJL9</accession>
<accession>Q3KP98</accession>
<sequence>MSVCYRPPGNETLLSWKGSRATGTAFLLLAALLGLPGNGFVVWSLAGWRPTAGRPLAATLVLHLALADGAVLLLTPLFVAFLSQEAWPLGQVGCKAVYYVCALSMYASVLLTGLLSLQRCLAVTRPFLAPRLRSPALARRLLLGVWLAALVLAVPAAVYRHLWGGRVCQLCHPSPVHAAAHLSLETLTAFVLPFGTVLGCYGVTLARLRGARWGSGRQGTRVGRLVSAIVLAFGLLWAPYHAVNLLQAVAALAPPEGPLARLGGAGQAARAGTTALAFFSSSVNPVLYVFTAGDLLPRAGPRFLTRLFEGSGEARGGSRSREGTMELRTTPKLKVMGQGRGNGDPGGGDGGKTEKDSQEW</sequence>
<proteinExistence type="evidence at transcript level"/>
<reference key="1">
    <citation type="journal article" date="2000" name="J. Exp. Med.">
        <title>A second leukotriene B4 receptor, BLT2: a new therapeutic target in inflammation and immunological disorders.</title>
        <authorList>
            <person name="Yokomizo T."/>
            <person name="Kato K."/>
            <person name="Terawaki K."/>
            <person name="Izumi T."/>
            <person name="Shimizu T."/>
        </authorList>
    </citation>
    <scope>NUCLEOTIDE SEQUENCE [MRNA]</scope>
</reference>
<reference key="2">
    <citation type="journal article" date="2004" name="Genome Res.">
        <title>The status, quality, and expansion of the NIH full-length cDNA project: the Mammalian Gene Collection (MGC).</title>
        <authorList>
            <consortium name="The MGC Project Team"/>
        </authorList>
    </citation>
    <scope>NUCLEOTIDE SEQUENCE [LARGE SCALE MRNA]</scope>
</reference>
<feature type="chain" id="PRO_0000069712" description="Leukotriene B4 receptor 2">
    <location>
        <begin position="1"/>
        <end position="360"/>
    </location>
</feature>
<feature type="topological domain" description="Extracellular" evidence="2">
    <location>
        <begin position="1"/>
        <end position="24"/>
    </location>
</feature>
<feature type="transmembrane region" description="Helical; Name=1" evidence="2">
    <location>
        <begin position="25"/>
        <end position="45"/>
    </location>
</feature>
<feature type="topological domain" description="Cytoplasmic" evidence="2">
    <location>
        <begin position="46"/>
        <end position="60"/>
    </location>
</feature>
<feature type="transmembrane region" description="Helical; Name=2" evidence="2">
    <location>
        <begin position="61"/>
        <end position="81"/>
    </location>
</feature>
<feature type="topological domain" description="Extracellular" evidence="2">
    <location>
        <begin position="82"/>
        <end position="96"/>
    </location>
</feature>
<feature type="transmembrane region" description="Helical; Name=3" evidence="2">
    <location>
        <begin position="97"/>
        <end position="117"/>
    </location>
</feature>
<feature type="topological domain" description="Cytoplasmic" evidence="2">
    <location>
        <begin position="118"/>
        <end position="140"/>
    </location>
</feature>
<feature type="transmembrane region" description="Helical; Name=4" evidence="2">
    <location>
        <begin position="141"/>
        <end position="161"/>
    </location>
</feature>
<feature type="topological domain" description="Extracellular" evidence="2">
    <location>
        <begin position="162"/>
        <end position="185"/>
    </location>
</feature>
<feature type="transmembrane region" description="Helical; Name=5" evidence="2">
    <location>
        <begin position="186"/>
        <end position="206"/>
    </location>
</feature>
<feature type="topological domain" description="Cytoplasmic" evidence="2">
    <location>
        <begin position="207"/>
        <end position="224"/>
    </location>
</feature>
<feature type="transmembrane region" description="Helical; Name=6" evidence="2">
    <location>
        <begin position="225"/>
        <end position="245"/>
    </location>
</feature>
<feature type="topological domain" description="Extracellular" evidence="2">
    <location>
        <begin position="246"/>
        <end position="275"/>
    </location>
</feature>
<feature type="transmembrane region" description="Helical; Name=7" evidence="2">
    <location>
        <begin position="276"/>
        <end position="296"/>
    </location>
</feature>
<feature type="topological domain" description="Cytoplasmic" evidence="2">
    <location>
        <begin position="297"/>
        <end position="360"/>
    </location>
</feature>
<feature type="region of interest" description="Disordered" evidence="4">
    <location>
        <begin position="311"/>
        <end position="360"/>
    </location>
</feature>
<feature type="compositionally biased region" description="Gly residues" evidence="4">
    <location>
        <begin position="338"/>
        <end position="350"/>
    </location>
</feature>
<feature type="compositionally biased region" description="Basic and acidic residues" evidence="4">
    <location>
        <begin position="351"/>
        <end position="360"/>
    </location>
</feature>
<feature type="glycosylation site" description="N-linked (GlcNAc...) asparagine" evidence="2">
    <location>
        <position position="10"/>
    </location>
</feature>
<organism>
    <name type="scientific">Mus musculus</name>
    <name type="common">Mouse</name>
    <dbReference type="NCBI Taxonomy" id="10090"/>
    <lineage>
        <taxon>Eukaryota</taxon>
        <taxon>Metazoa</taxon>
        <taxon>Chordata</taxon>
        <taxon>Craniata</taxon>
        <taxon>Vertebrata</taxon>
        <taxon>Euteleostomi</taxon>
        <taxon>Mammalia</taxon>
        <taxon>Eutheria</taxon>
        <taxon>Euarchontoglires</taxon>
        <taxon>Glires</taxon>
        <taxon>Rodentia</taxon>
        <taxon>Myomorpha</taxon>
        <taxon>Muroidea</taxon>
        <taxon>Muridae</taxon>
        <taxon>Murinae</taxon>
        <taxon>Mus</taxon>
        <taxon>Mus</taxon>
    </lineage>
</organism>
<name>LT4R2_MOUSE</name>
<dbReference type="EMBL" id="AB029893">
    <property type="protein sequence ID" value="BAA99554.1"/>
    <property type="molecule type" value="mRNA"/>
</dbReference>
<dbReference type="EMBL" id="BC106834">
    <property type="protein sequence ID" value="AAI06835.1"/>
    <property type="molecule type" value="mRNA"/>
</dbReference>
<dbReference type="EMBL" id="BC106835">
    <property type="protein sequence ID" value="AAI06836.1"/>
    <property type="molecule type" value="mRNA"/>
</dbReference>
<dbReference type="CCDS" id="CCDS27128.1"/>
<dbReference type="RefSeq" id="NP_065236.1">
    <property type="nucleotide sequence ID" value="NM_020490.3"/>
</dbReference>
<dbReference type="RefSeq" id="XP_006519389.1">
    <property type="nucleotide sequence ID" value="XM_006519326.3"/>
</dbReference>
<dbReference type="SMR" id="Q9JJL9"/>
<dbReference type="FunCoup" id="Q9JJL9">
    <property type="interactions" value="825"/>
</dbReference>
<dbReference type="STRING" id="10090.ENSMUSP00000048358"/>
<dbReference type="GuidetoPHARMACOLOGY" id="268"/>
<dbReference type="GlyCosmos" id="Q9JJL9">
    <property type="glycosylation" value="1 site, No reported glycans"/>
</dbReference>
<dbReference type="GlyGen" id="Q9JJL9">
    <property type="glycosylation" value="1 site"/>
</dbReference>
<dbReference type="PhosphoSitePlus" id="Q9JJL9"/>
<dbReference type="PaxDb" id="10090-ENSMUSP00000048358"/>
<dbReference type="Antibodypedia" id="9159">
    <property type="antibodies" value="222 antibodies from 28 providers"/>
</dbReference>
<dbReference type="DNASU" id="57260"/>
<dbReference type="Ensembl" id="ENSMUST00000044554.5">
    <property type="protein sequence ID" value="ENSMUSP00000048358.5"/>
    <property type="gene ID" value="ENSMUSG00000040432.6"/>
</dbReference>
<dbReference type="GeneID" id="57260"/>
<dbReference type="KEGG" id="mmu:57260"/>
<dbReference type="UCSC" id="uc007uaq.1">
    <property type="organism name" value="mouse"/>
</dbReference>
<dbReference type="AGR" id="MGI:1888501"/>
<dbReference type="CTD" id="56413"/>
<dbReference type="MGI" id="MGI:1888501">
    <property type="gene designation" value="Ltb4r2"/>
</dbReference>
<dbReference type="VEuPathDB" id="HostDB:ENSMUSG00000040432"/>
<dbReference type="eggNOG" id="KOG3656">
    <property type="taxonomic scope" value="Eukaryota"/>
</dbReference>
<dbReference type="GeneTree" id="ENSGT00950000182966"/>
<dbReference type="HOGENOM" id="CLU_009579_8_0_1"/>
<dbReference type="InParanoid" id="Q9JJL9"/>
<dbReference type="OMA" id="ICEPCHS"/>
<dbReference type="OrthoDB" id="5980579at2759"/>
<dbReference type="PhylomeDB" id="Q9JJL9"/>
<dbReference type="TreeFam" id="TF330976"/>
<dbReference type="Reactome" id="R-MMU-391906">
    <property type="pathway name" value="Leukotriene receptors"/>
</dbReference>
<dbReference type="Reactome" id="R-MMU-416476">
    <property type="pathway name" value="G alpha (q) signalling events"/>
</dbReference>
<dbReference type="BioGRID-ORCS" id="57260">
    <property type="hits" value="2 hits in 77 CRISPR screens"/>
</dbReference>
<dbReference type="PRO" id="PR:Q9JJL9"/>
<dbReference type="Proteomes" id="UP000000589">
    <property type="component" value="Chromosome 14"/>
</dbReference>
<dbReference type="RNAct" id="Q9JJL9">
    <property type="molecule type" value="protein"/>
</dbReference>
<dbReference type="Bgee" id="ENSMUSG00000040432">
    <property type="expression patterns" value="Expressed in lip and 24 other cell types or tissues"/>
</dbReference>
<dbReference type="GO" id="GO:0016020">
    <property type="term" value="C:membrane"/>
    <property type="evidence" value="ECO:0000314"/>
    <property type="project" value="MGI"/>
</dbReference>
<dbReference type="GO" id="GO:0005654">
    <property type="term" value="C:nucleoplasm"/>
    <property type="evidence" value="ECO:0007669"/>
    <property type="project" value="Ensembl"/>
</dbReference>
<dbReference type="GO" id="GO:0005886">
    <property type="term" value="C:plasma membrane"/>
    <property type="evidence" value="ECO:0007669"/>
    <property type="project" value="UniProtKB-SubCell"/>
</dbReference>
<dbReference type="GO" id="GO:0001632">
    <property type="term" value="F:leukotriene B4 receptor activity"/>
    <property type="evidence" value="ECO:0000314"/>
    <property type="project" value="MGI"/>
</dbReference>
<dbReference type="GO" id="GO:0051546">
    <property type="term" value="P:keratinocyte migration"/>
    <property type="evidence" value="ECO:0000314"/>
    <property type="project" value="MGI"/>
</dbReference>
<dbReference type="GO" id="GO:0007165">
    <property type="term" value="P:signal transduction"/>
    <property type="evidence" value="ECO:0000314"/>
    <property type="project" value="MGI"/>
</dbReference>
<dbReference type="FunFam" id="1.20.1070.10:FF:000109">
    <property type="entry name" value="Leukotriene B4 receptor"/>
    <property type="match status" value="1"/>
</dbReference>
<dbReference type="Gene3D" id="1.20.1070.10">
    <property type="entry name" value="Rhodopsin 7-helix transmembrane proteins"/>
    <property type="match status" value="1"/>
</dbReference>
<dbReference type="InterPro" id="IPR000276">
    <property type="entry name" value="GPCR_Rhodpsn"/>
</dbReference>
<dbReference type="InterPro" id="IPR017452">
    <property type="entry name" value="GPCR_Rhodpsn_7TM"/>
</dbReference>
<dbReference type="InterPro" id="IPR003981">
    <property type="entry name" value="Leukotriene_B4_rcpt"/>
</dbReference>
<dbReference type="InterPro" id="IPR003982">
    <property type="entry name" value="Leukotriene_B4_typ-2_rcpt"/>
</dbReference>
<dbReference type="PANTHER" id="PTHR24230">
    <property type="entry name" value="G-PROTEIN COUPLED RECEPTOR"/>
    <property type="match status" value="1"/>
</dbReference>
<dbReference type="PANTHER" id="PTHR24230:SF8">
    <property type="entry name" value="LEUKOTRIENE B4 RECEPTOR 2"/>
    <property type="match status" value="1"/>
</dbReference>
<dbReference type="Pfam" id="PF00001">
    <property type="entry name" value="7tm_1"/>
    <property type="match status" value="1"/>
</dbReference>
<dbReference type="PRINTS" id="PR00237">
    <property type="entry name" value="GPCRRHODOPSN"/>
</dbReference>
<dbReference type="PRINTS" id="PR01478">
    <property type="entry name" value="LTB2RECEPTOR"/>
</dbReference>
<dbReference type="PRINTS" id="PR01476">
    <property type="entry name" value="LTBRECEPTOR"/>
</dbReference>
<dbReference type="SUPFAM" id="SSF81321">
    <property type="entry name" value="Family A G protein-coupled receptor-like"/>
    <property type="match status" value="1"/>
</dbReference>
<dbReference type="PROSITE" id="PS50262">
    <property type="entry name" value="G_PROTEIN_RECEP_F1_2"/>
    <property type="match status" value="1"/>
</dbReference>
<keyword id="KW-1003">Cell membrane</keyword>
<keyword id="KW-0297">G-protein coupled receptor</keyword>
<keyword id="KW-0325">Glycoprotein</keyword>
<keyword id="KW-0472">Membrane</keyword>
<keyword id="KW-0675">Receptor</keyword>
<keyword id="KW-1185">Reference proteome</keyword>
<keyword id="KW-0807">Transducer</keyword>
<keyword id="KW-0812">Transmembrane</keyword>
<keyword id="KW-1133">Transmembrane helix</keyword>
<gene>
    <name type="primary">Ltb4r2</name>
    <name type="synonym">Blt2</name>
</gene>
<protein>
    <recommendedName>
        <fullName>Leukotriene B4 receptor 2</fullName>
        <shortName>LTB4-R 2</shortName>
        <shortName>LTB4-R2</shortName>
    </recommendedName>
    <alternativeName>
        <fullName>Leukotriene B4 receptor BLT2</fullName>
    </alternativeName>
</protein>